<feature type="chain" id="PRO_0000427384" description="Uncharacterized protein MT1397">
    <location>
        <begin position="1"/>
        <end position="623"/>
    </location>
</feature>
<feature type="domain" description="GAF">
    <location>
        <begin position="28"/>
        <end position="171"/>
    </location>
</feature>
<feature type="domain" description="GGDEF" evidence="2">
    <location>
        <begin position="212"/>
        <end position="345"/>
    </location>
</feature>
<feature type="domain" description="EAL" evidence="1">
    <location>
        <begin position="354"/>
        <end position="609"/>
    </location>
</feature>
<keyword id="KW-1185">Reference proteome</keyword>
<accession>P9WM12</accession>
<accession>L0T6L7</accession>
<accession>P64825</accession>
<accession>Q11024</accession>
<name>Y1354_MYCTO</name>
<organism>
    <name type="scientific">Mycobacterium tuberculosis (strain CDC 1551 / Oshkosh)</name>
    <dbReference type="NCBI Taxonomy" id="83331"/>
    <lineage>
        <taxon>Bacteria</taxon>
        <taxon>Bacillati</taxon>
        <taxon>Actinomycetota</taxon>
        <taxon>Actinomycetes</taxon>
        <taxon>Mycobacteriales</taxon>
        <taxon>Mycobacteriaceae</taxon>
        <taxon>Mycobacterium</taxon>
        <taxon>Mycobacterium tuberculosis complex</taxon>
    </lineage>
</organism>
<proteinExistence type="predicted"/>
<dbReference type="EMBL" id="AE000516">
    <property type="protein sequence ID" value="AAK45660.1"/>
    <property type="molecule type" value="Genomic_DNA"/>
</dbReference>
<dbReference type="PIR" id="A70741">
    <property type="entry name" value="A70741"/>
</dbReference>
<dbReference type="RefSeq" id="WP_003898837.1">
    <property type="nucleotide sequence ID" value="NZ_KK341227.1"/>
</dbReference>
<dbReference type="SMR" id="P9WM12"/>
<dbReference type="KEGG" id="mtc:MT1397"/>
<dbReference type="PATRIC" id="fig|83331.31.peg.1504"/>
<dbReference type="HOGENOM" id="CLU_000445_70_50_11"/>
<dbReference type="Proteomes" id="UP000001020">
    <property type="component" value="Chromosome"/>
</dbReference>
<dbReference type="GO" id="GO:0071111">
    <property type="term" value="F:cyclic-guanylate-specific phosphodiesterase activity"/>
    <property type="evidence" value="ECO:0007669"/>
    <property type="project" value="InterPro"/>
</dbReference>
<dbReference type="CDD" id="cd01948">
    <property type="entry name" value="EAL"/>
    <property type="match status" value="1"/>
</dbReference>
<dbReference type="CDD" id="cd01949">
    <property type="entry name" value="GGDEF"/>
    <property type="match status" value="1"/>
</dbReference>
<dbReference type="Gene3D" id="3.30.450.40">
    <property type="match status" value="1"/>
</dbReference>
<dbReference type="Gene3D" id="3.30.70.270">
    <property type="match status" value="1"/>
</dbReference>
<dbReference type="Gene3D" id="3.20.20.450">
    <property type="entry name" value="EAL domain"/>
    <property type="match status" value="1"/>
</dbReference>
<dbReference type="InterPro" id="IPR050706">
    <property type="entry name" value="Cyclic-di-GMP_PDE-like"/>
</dbReference>
<dbReference type="InterPro" id="IPR001633">
    <property type="entry name" value="EAL_dom"/>
</dbReference>
<dbReference type="InterPro" id="IPR035919">
    <property type="entry name" value="EAL_sf"/>
</dbReference>
<dbReference type="InterPro" id="IPR003018">
    <property type="entry name" value="GAF"/>
</dbReference>
<dbReference type="InterPro" id="IPR029016">
    <property type="entry name" value="GAF-like_dom_sf"/>
</dbReference>
<dbReference type="InterPro" id="IPR000160">
    <property type="entry name" value="GGDEF_dom"/>
</dbReference>
<dbReference type="InterPro" id="IPR029787">
    <property type="entry name" value="Nucleotide_cyclase"/>
</dbReference>
<dbReference type="InterPro" id="IPR043128">
    <property type="entry name" value="Rev_trsase/Diguanyl_cyclase"/>
</dbReference>
<dbReference type="NCBIfam" id="TIGR00254">
    <property type="entry name" value="GGDEF"/>
    <property type="match status" value="1"/>
</dbReference>
<dbReference type="PANTHER" id="PTHR33121">
    <property type="entry name" value="CYCLIC DI-GMP PHOSPHODIESTERASE PDEF"/>
    <property type="match status" value="1"/>
</dbReference>
<dbReference type="PANTHER" id="PTHR33121:SF70">
    <property type="entry name" value="SIGNALING PROTEIN YKOW"/>
    <property type="match status" value="1"/>
</dbReference>
<dbReference type="Pfam" id="PF00563">
    <property type="entry name" value="EAL"/>
    <property type="match status" value="1"/>
</dbReference>
<dbReference type="Pfam" id="PF13185">
    <property type="entry name" value="GAF_2"/>
    <property type="match status" value="1"/>
</dbReference>
<dbReference type="Pfam" id="PF00990">
    <property type="entry name" value="GGDEF"/>
    <property type="match status" value="1"/>
</dbReference>
<dbReference type="SMART" id="SM00052">
    <property type="entry name" value="EAL"/>
    <property type="match status" value="1"/>
</dbReference>
<dbReference type="SMART" id="SM00065">
    <property type="entry name" value="GAF"/>
    <property type="match status" value="1"/>
</dbReference>
<dbReference type="SMART" id="SM00267">
    <property type="entry name" value="GGDEF"/>
    <property type="match status" value="1"/>
</dbReference>
<dbReference type="SUPFAM" id="SSF141868">
    <property type="entry name" value="EAL domain-like"/>
    <property type="match status" value="1"/>
</dbReference>
<dbReference type="SUPFAM" id="SSF55781">
    <property type="entry name" value="GAF domain-like"/>
    <property type="match status" value="1"/>
</dbReference>
<dbReference type="SUPFAM" id="SSF55073">
    <property type="entry name" value="Nucleotide cyclase"/>
    <property type="match status" value="1"/>
</dbReference>
<dbReference type="PROSITE" id="PS50883">
    <property type="entry name" value="EAL"/>
    <property type="match status" value="1"/>
</dbReference>
<dbReference type="PROSITE" id="PS50887">
    <property type="entry name" value="GGDEF"/>
    <property type="match status" value="1"/>
</dbReference>
<evidence type="ECO:0000255" key="1">
    <source>
        <dbReference type="PROSITE-ProRule" id="PRU00074"/>
    </source>
</evidence>
<evidence type="ECO:0000255" key="2">
    <source>
        <dbReference type="PROSITE-ProRule" id="PRU00095"/>
    </source>
</evidence>
<sequence>MCNDTATPQLEELVTTVANQLMTVDAATSAEVSQRVLAYLVEQLGVDVSFLRHNDRDRRATRLVAEWPPRLNIPDPDPLRLIYFADADPVFALCEHAKEPLVFRPEPATEDYQRLIEEARGVPVTSAAAVPLVSGEITTGLLGFIKFGDRKWHEAELNALMTIATLFAQVQARVAAEARLRYLADHDDLTGLHNRRALLQHLDQRLAPGQPGPVAALFLDLDRLKAINDYLGHAAGDQFIHVFAQRIGDALVGESLIARLGGDEFVLIPASPMSADAAQPLAERLRDQLKDHVAIGGEVLTRTVSIGVASGTPGQHTPSDLLRRADQAALAAKHAGGDSVAIFTADMSVSGELRNDIELHLRRGIESDALRLVYLPEVDLRTGDIVGTEALVRWQHPTRGLLAPGCFIPVAESINLAGELDRWVLRRACNEFSEWQSAGLGHDALLRINVSAGQLVTGGFVDFVADTIGQHGLDASSVCLEITENVVVQDLHTARATLARLKEVGVHIAIDDFGTGYSAISLLQTLPIDTLKIDKTFVRQLGTNTSDLVIVRGIMTLAEGFQLDVVAEGVETEAAARILLDQRCYRAQGFLFSRPVPGEAMRHMLSARRLPPTCIPATDPALS</sequence>
<gene>
    <name type="ordered locus">MT1397</name>
</gene>
<reference key="1">
    <citation type="journal article" date="2002" name="J. Bacteriol.">
        <title>Whole-genome comparison of Mycobacterium tuberculosis clinical and laboratory strains.</title>
        <authorList>
            <person name="Fleischmann R.D."/>
            <person name="Alland D."/>
            <person name="Eisen J.A."/>
            <person name="Carpenter L."/>
            <person name="White O."/>
            <person name="Peterson J.D."/>
            <person name="DeBoy R.T."/>
            <person name="Dodson R.J."/>
            <person name="Gwinn M.L."/>
            <person name="Haft D.H."/>
            <person name="Hickey E.K."/>
            <person name="Kolonay J.F."/>
            <person name="Nelson W.C."/>
            <person name="Umayam L.A."/>
            <person name="Ermolaeva M.D."/>
            <person name="Salzberg S.L."/>
            <person name="Delcher A."/>
            <person name="Utterback T.R."/>
            <person name="Weidman J.F."/>
            <person name="Khouri H.M."/>
            <person name="Gill J."/>
            <person name="Mikula A."/>
            <person name="Bishai W."/>
            <person name="Jacobs W.R. Jr."/>
            <person name="Venter J.C."/>
            <person name="Fraser C.M."/>
        </authorList>
    </citation>
    <scope>NUCLEOTIDE SEQUENCE [LARGE SCALE GENOMIC DNA]</scope>
    <source>
        <strain>CDC 1551 / Oshkosh</strain>
    </source>
</reference>
<protein>
    <recommendedName>
        <fullName>Uncharacterized protein MT1397</fullName>
    </recommendedName>
</protein>